<reference key="1">
    <citation type="submission" date="2004-08" db="EMBL/GenBank/DDBJ databases">
        <authorList>
            <consortium name="NIH - Xenopus Gene Collection (XGC) project"/>
        </authorList>
    </citation>
    <scope>NUCLEOTIDE SEQUENCE [LARGE SCALE MRNA]</scope>
    <source>
        <tissue>Embryo</tissue>
    </source>
</reference>
<name>CUE2B_XENLA</name>
<accession>Q68F60</accession>
<organism>
    <name type="scientific">Xenopus laevis</name>
    <name type="common">African clawed frog</name>
    <dbReference type="NCBI Taxonomy" id="8355"/>
    <lineage>
        <taxon>Eukaryota</taxon>
        <taxon>Metazoa</taxon>
        <taxon>Chordata</taxon>
        <taxon>Craniata</taxon>
        <taxon>Vertebrata</taxon>
        <taxon>Euteleostomi</taxon>
        <taxon>Amphibia</taxon>
        <taxon>Batrachia</taxon>
        <taxon>Anura</taxon>
        <taxon>Pipoidea</taxon>
        <taxon>Pipidae</taxon>
        <taxon>Xenopodinae</taxon>
        <taxon>Xenopus</taxon>
        <taxon>Xenopus</taxon>
    </lineage>
</organism>
<feature type="chain" id="PRO_0000282997" description="CUE domain-containing protein 2-B">
    <location>
        <begin position="1"/>
        <end position="269"/>
    </location>
</feature>
<feature type="domain" description="CUE">
    <location>
        <begin position="131"/>
        <end position="174"/>
    </location>
</feature>
<feature type="region of interest" description="Disordered" evidence="2">
    <location>
        <begin position="110"/>
        <end position="130"/>
    </location>
</feature>
<comment type="function">
    <text evidence="1">May play a role in targeting proteins for ubiquitination and subsequent proteasomal degradation.</text>
</comment>
<comment type="subcellular location">
    <subcellularLocation>
        <location evidence="1">Cytoplasm</location>
    </subcellularLocation>
    <subcellularLocation>
        <location evidence="1">Nucleus</location>
    </subcellularLocation>
</comment>
<comment type="PTM">
    <text evidence="1">Phosphorylated.</text>
</comment>
<comment type="similarity">
    <text evidence="3">Belongs to the CUEDC2 family.</text>
</comment>
<keyword id="KW-0963">Cytoplasm</keyword>
<keyword id="KW-0539">Nucleus</keyword>
<keyword id="KW-0597">Phosphoprotein</keyword>
<keyword id="KW-1185">Reference proteome</keyword>
<keyword id="KW-0833">Ubl conjugation pathway</keyword>
<gene>
    <name type="primary">cuedc2-b</name>
</gene>
<dbReference type="EMBL" id="BC079984">
    <property type="protein sequence ID" value="AAH79984.1"/>
    <property type="molecule type" value="mRNA"/>
</dbReference>
<dbReference type="RefSeq" id="NP_001087476.1">
    <property type="nucleotide sequence ID" value="NM_001094007.1"/>
</dbReference>
<dbReference type="BioGRID" id="104160">
    <property type="interactions" value="1"/>
</dbReference>
<dbReference type="IntAct" id="Q68F60">
    <property type="interactions" value="1"/>
</dbReference>
<dbReference type="GeneID" id="447300"/>
<dbReference type="KEGG" id="xla:447300"/>
<dbReference type="AGR" id="Xenbase:XB-GENE-6254018"/>
<dbReference type="CTD" id="447300"/>
<dbReference type="Xenbase" id="XB-GENE-6254018">
    <property type="gene designation" value="cuedc2.L"/>
</dbReference>
<dbReference type="OMA" id="ICEWIYK"/>
<dbReference type="OrthoDB" id="10060331at2759"/>
<dbReference type="Proteomes" id="UP000186698">
    <property type="component" value="Chromosome 7L"/>
</dbReference>
<dbReference type="Bgee" id="447300">
    <property type="expression patterns" value="Expressed in gastrula and 17 other cell types or tissues"/>
</dbReference>
<dbReference type="GO" id="GO:0005737">
    <property type="term" value="C:cytoplasm"/>
    <property type="evidence" value="ECO:0007669"/>
    <property type="project" value="UniProtKB-SubCell"/>
</dbReference>
<dbReference type="GO" id="GO:0005634">
    <property type="term" value="C:nucleus"/>
    <property type="evidence" value="ECO:0007669"/>
    <property type="project" value="UniProtKB-SubCell"/>
</dbReference>
<dbReference type="CDD" id="cd14367">
    <property type="entry name" value="CUE_CUED2"/>
    <property type="match status" value="1"/>
</dbReference>
<dbReference type="InterPro" id="IPR039805">
    <property type="entry name" value="CUE_CUED2"/>
</dbReference>
<dbReference type="PANTHER" id="PTHR12493">
    <property type="entry name" value="CUE DOMAIN CONTAINING 2"/>
    <property type="match status" value="1"/>
</dbReference>
<dbReference type="PANTHER" id="PTHR12493:SF0">
    <property type="entry name" value="CUE DOMAIN-CONTAINING PROTEIN 2"/>
    <property type="match status" value="1"/>
</dbReference>
<evidence type="ECO:0000250" key="1"/>
<evidence type="ECO:0000256" key="2">
    <source>
        <dbReference type="SAM" id="MobiDB-lite"/>
    </source>
</evidence>
<evidence type="ECO:0000305" key="3"/>
<sequence>MALEKIIRESLTGFLQCHIAHADLSALDEVFCAYVTGVLEELGSQNSSEEDFEMESFVEMLEGYIPGFSEISSEKVYDMLFELSGRLSEARGTENVSPNPTVEVSFMTPASPSEKTATEPLEGAVAQDKDDPKTGVDLLLEIFPSCTITQAQTALSMAKGDLEDAVQIIVDGKVIADNHSGSKDMQGAPKIEDLKDFILQKYMLVDTEDDKKTYRPVAPKEAPKKMIRYIDNQVVSTKGERYKDIKKPESEEMKKTYINLKPARKYKFH</sequence>
<protein>
    <recommendedName>
        <fullName>CUE domain-containing protein 2-B</fullName>
    </recommendedName>
</protein>
<proteinExistence type="evidence at transcript level"/>